<dbReference type="RefSeq" id="NP_001076052.1">
    <property type="nucleotide sequence ID" value="NM_001082583.4"/>
</dbReference>
<dbReference type="SMR" id="Q5DRF0"/>
<dbReference type="FunCoup" id="Q5DRF0">
    <property type="interactions" value="20"/>
</dbReference>
<dbReference type="GlyCosmos" id="Q5DRF0">
    <property type="glycosylation" value="4 sites, No reported glycans"/>
</dbReference>
<dbReference type="Ensembl" id="ENSPTRT00000066652.3">
    <property type="protein sequence ID" value="ENSPTRP00000058232.3"/>
    <property type="gene ID" value="ENSPTRG00000017328.7"/>
</dbReference>
<dbReference type="GeneID" id="100034708"/>
<dbReference type="KEGG" id="ptr:100034708"/>
<dbReference type="CTD" id="56146"/>
<dbReference type="GeneTree" id="ENSGT00940000160554"/>
<dbReference type="InParanoid" id="Q5DRF0"/>
<dbReference type="OrthoDB" id="7226at9604"/>
<dbReference type="Proteomes" id="UP000002277">
    <property type="component" value="Chromosome 5"/>
</dbReference>
<dbReference type="Bgee" id="ENSPTRG00000017328">
    <property type="expression patterns" value="Expressed in cerebellum and 18 other cell types or tissues"/>
</dbReference>
<dbReference type="GO" id="GO:0005886">
    <property type="term" value="C:plasma membrane"/>
    <property type="evidence" value="ECO:0000318"/>
    <property type="project" value="GO_Central"/>
</dbReference>
<dbReference type="GO" id="GO:0005509">
    <property type="term" value="F:calcium ion binding"/>
    <property type="evidence" value="ECO:0007669"/>
    <property type="project" value="InterPro"/>
</dbReference>
<dbReference type="GO" id="GO:0007155">
    <property type="term" value="P:cell adhesion"/>
    <property type="evidence" value="ECO:0000318"/>
    <property type="project" value="GO_Central"/>
</dbReference>
<dbReference type="GO" id="GO:0007156">
    <property type="term" value="P:homophilic cell adhesion via plasma membrane adhesion molecules"/>
    <property type="evidence" value="ECO:0007669"/>
    <property type="project" value="InterPro"/>
</dbReference>
<dbReference type="GO" id="GO:0007399">
    <property type="term" value="P:nervous system development"/>
    <property type="evidence" value="ECO:0007669"/>
    <property type="project" value="UniProtKB-ARBA"/>
</dbReference>
<dbReference type="CDD" id="cd11304">
    <property type="entry name" value="Cadherin_repeat"/>
    <property type="match status" value="6"/>
</dbReference>
<dbReference type="FunFam" id="2.60.40.60:FF:000001">
    <property type="entry name" value="Protocadherin alpha 2"/>
    <property type="match status" value="1"/>
</dbReference>
<dbReference type="FunFam" id="2.60.40.60:FF:000002">
    <property type="entry name" value="Protocadherin alpha 2"/>
    <property type="match status" value="1"/>
</dbReference>
<dbReference type="FunFam" id="2.60.40.60:FF:000003">
    <property type="entry name" value="Protocadherin alpha 2"/>
    <property type="match status" value="1"/>
</dbReference>
<dbReference type="FunFam" id="2.60.40.60:FF:000006">
    <property type="entry name" value="Protocadherin alpha 2"/>
    <property type="match status" value="1"/>
</dbReference>
<dbReference type="FunFam" id="2.60.40.60:FF:000007">
    <property type="entry name" value="Protocadherin alpha 2"/>
    <property type="match status" value="1"/>
</dbReference>
<dbReference type="FunFam" id="2.60.40.60:FF:000076">
    <property type="entry name" value="Protocadherin alpha 2"/>
    <property type="match status" value="1"/>
</dbReference>
<dbReference type="Gene3D" id="2.60.40.60">
    <property type="entry name" value="Cadherins"/>
    <property type="match status" value="6"/>
</dbReference>
<dbReference type="InterPro" id="IPR002126">
    <property type="entry name" value="Cadherin-like_dom"/>
</dbReference>
<dbReference type="InterPro" id="IPR015919">
    <property type="entry name" value="Cadherin-like_sf"/>
</dbReference>
<dbReference type="InterPro" id="IPR031904">
    <property type="entry name" value="Cadherin_CBD"/>
</dbReference>
<dbReference type="InterPro" id="IPR020894">
    <property type="entry name" value="Cadherin_CS"/>
</dbReference>
<dbReference type="InterPro" id="IPR013164">
    <property type="entry name" value="Cadherin_N"/>
</dbReference>
<dbReference type="InterPro" id="IPR050174">
    <property type="entry name" value="Protocadherin/Cadherin-CA"/>
</dbReference>
<dbReference type="PANTHER" id="PTHR24028">
    <property type="entry name" value="CADHERIN-87A"/>
    <property type="match status" value="1"/>
</dbReference>
<dbReference type="PANTHER" id="PTHR24028:SF60">
    <property type="entry name" value="PROTOCADHERIN ALPHA-2"/>
    <property type="match status" value="1"/>
</dbReference>
<dbReference type="Pfam" id="PF00028">
    <property type="entry name" value="Cadherin"/>
    <property type="match status" value="5"/>
</dbReference>
<dbReference type="Pfam" id="PF08266">
    <property type="entry name" value="Cadherin_2"/>
    <property type="match status" value="1"/>
</dbReference>
<dbReference type="Pfam" id="PF15974">
    <property type="entry name" value="Cadherin_tail"/>
    <property type="match status" value="1"/>
</dbReference>
<dbReference type="PRINTS" id="PR00205">
    <property type="entry name" value="CADHERIN"/>
</dbReference>
<dbReference type="SMART" id="SM00112">
    <property type="entry name" value="CA"/>
    <property type="match status" value="6"/>
</dbReference>
<dbReference type="SUPFAM" id="SSF49313">
    <property type="entry name" value="Cadherin-like"/>
    <property type="match status" value="6"/>
</dbReference>
<dbReference type="PROSITE" id="PS00232">
    <property type="entry name" value="CADHERIN_1"/>
    <property type="match status" value="5"/>
</dbReference>
<dbReference type="PROSITE" id="PS50268">
    <property type="entry name" value="CADHERIN_2"/>
    <property type="match status" value="6"/>
</dbReference>
<comment type="function">
    <text>Potential calcium-dependent cell-adhesion protein. May be involved in the establishment and maintenance of specific neuronal connections in the brain.</text>
</comment>
<comment type="subcellular location">
    <subcellularLocation>
        <location evidence="1">Cell membrane</location>
        <topology evidence="1">Single-pass type I membrane protein</topology>
    </subcellularLocation>
</comment>
<reference key="1">
    <citation type="journal article" date="2005" name="Nature">
        <title>Initial sequence of the chimpanzee genome and comparison with the human genome.</title>
        <authorList>
            <consortium name="Chimpanzee sequencing and analysis consortium"/>
        </authorList>
    </citation>
    <scope>NUCLEOTIDE SEQUENCE [LARGE SCALE GENOMIC DNA]</scope>
</reference>
<reference key="2">
    <citation type="journal article" date="2005" name="Genetics">
        <title>Comparative genomics and diversifying selection of the clustered vertebrate protocadherin genes.</title>
        <authorList>
            <person name="Wu Q."/>
        </authorList>
    </citation>
    <scope>IDENTIFICATION</scope>
</reference>
<accession>Q5DRF0</accession>
<keyword id="KW-0106">Calcium</keyword>
<keyword id="KW-0130">Cell adhesion</keyword>
<keyword id="KW-1003">Cell membrane</keyword>
<keyword id="KW-0325">Glycoprotein</keyword>
<keyword id="KW-0472">Membrane</keyword>
<keyword id="KW-1185">Reference proteome</keyword>
<keyword id="KW-0677">Repeat</keyword>
<keyword id="KW-0732">Signal</keyword>
<keyword id="KW-0812">Transmembrane</keyword>
<keyword id="KW-1133">Transmembrane helix</keyword>
<gene>
    <name type="primary">PCDHA2</name>
</gene>
<protein>
    <recommendedName>
        <fullName>Protocadherin alpha-2</fullName>
        <shortName>PCDH-alpha-2</shortName>
    </recommendedName>
</protein>
<feature type="signal peptide" evidence="1">
    <location>
        <begin position="1"/>
        <end position="22"/>
    </location>
</feature>
<feature type="chain" id="PRO_0000003887" description="Protocadherin alpha-2">
    <location>
        <begin position="23"/>
        <end position="948"/>
    </location>
</feature>
<feature type="topological domain" description="Extracellular" evidence="2">
    <location>
        <begin position="23"/>
        <end position="697"/>
    </location>
</feature>
<feature type="transmembrane region" description="Helical" evidence="2">
    <location>
        <begin position="698"/>
        <end position="718"/>
    </location>
</feature>
<feature type="topological domain" description="Cytoplasmic" evidence="2">
    <location>
        <begin position="719"/>
        <end position="948"/>
    </location>
</feature>
<feature type="domain" description="Cadherin 1" evidence="3">
    <location>
        <begin position="30"/>
        <end position="133"/>
    </location>
</feature>
<feature type="domain" description="Cadherin 2" evidence="3">
    <location>
        <begin position="157"/>
        <end position="242"/>
    </location>
</feature>
<feature type="domain" description="Cadherin 3" evidence="3">
    <location>
        <begin position="243"/>
        <end position="350"/>
    </location>
</feature>
<feature type="domain" description="Cadherin 4" evidence="3">
    <location>
        <begin position="351"/>
        <end position="455"/>
    </location>
</feature>
<feature type="domain" description="Cadherin 5" evidence="3">
    <location>
        <begin position="456"/>
        <end position="565"/>
    </location>
</feature>
<feature type="domain" description="Cadherin 6" evidence="3">
    <location>
        <begin position="588"/>
        <end position="678"/>
    </location>
</feature>
<feature type="repeat" description="PXXP 1">
    <location>
        <begin position="734"/>
        <end position="737"/>
    </location>
</feature>
<feature type="repeat" description="PXXP 2">
    <location>
        <begin position="797"/>
        <end position="800"/>
    </location>
</feature>
<feature type="repeat" description="PXXP 3">
    <location>
        <begin position="830"/>
        <end position="833"/>
    </location>
</feature>
<feature type="repeat" description="PXXP 4">
    <location>
        <begin position="871"/>
        <end position="874"/>
    </location>
</feature>
<feature type="repeat" description="PXXP 5">
    <location>
        <begin position="889"/>
        <end position="892"/>
    </location>
</feature>
<feature type="region of interest" description="5 X 4 AA repeats of P-X-X-P">
    <location>
        <begin position="734"/>
        <end position="892"/>
    </location>
</feature>
<feature type="region of interest" description="Disordered" evidence="4">
    <location>
        <begin position="755"/>
        <end position="801"/>
    </location>
</feature>
<feature type="region of interest" description="Disordered" evidence="4">
    <location>
        <begin position="829"/>
        <end position="854"/>
    </location>
</feature>
<feature type="region of interest" description="Disordered" evidence="4">
    <location>
        <begin position="868"/>
        <end position="948"/>
    </location>
</feature>
<feature type="compositionally biased region" description="Basic and acidic residues" evidence="4">
    <location>
        <begin position="783"/>
        <end position="795"/>
    </location>
</feature>
<feature type="compositionally biased region" description="Basic and acidic residues" evidence="4">
    <location>
        <begin position="907"/>
        <end position="921"/>
    </location>
</feature>
<feature type="glycosylation site" description="N-linked (GlcNAc...) asparagine" evidence="2">
    <location>
        <position position="257"/>
    </location>
</feature>
<feature type="glycosylation site" description="N-linked (GlcNAc...) asparagine" evidence="2">
    <location>
        <position position="265"/>
    </location>
</feature>
<feature type="glycosylation site" description="N-linked (GlcNAc...) asparagine" evidence="2">
    <location>
        <position position="362"/>
    </location>
</feature>
<feature type="glycosylation site" description="N-linked (GlcNAc...) asparagine" evidence="2">
    <location>
        <position position="548"/>
    </location>
</feature>
<organism>
    <name type="scientific">Pan troglodytes</name>
    <name type="common">Chimpanzee</name>
    <dbReference type="NCBI Taxonomy" id="9598"/>
    <lineage>
        <taxon>Eukaryota</taxon>
        <taxon>Metazoa</taxon>
        <taxon>Chordata</taxon>
        <taxon>Craniata</taxon>
        <taxon>Vertebrata</taxon>
        <taxon>Euteleostomi</taxon>
        <taxon>Mammalia</taxon>
        <taxon>Eutheria</taxon>
        <taxon>Euarchontoglires</taxon>
        <taxon>Primates</taxon>
        <taxon>Haplorrhini</taxon>
        <taxon>Catarrhini</taxon>
        <taxon>Hominidae</taxon>
        <taxon>Pan</taxon>
    </lineage>
</organism>
<evidence type="ECO:0000250" key="1"/>
<evidence type="ECO:0000255" key="2"/>
<evidence type="ECO:0000255" key="3">
    <source>
        <dbReference type="PROSITE-ProRule" id="PRU00043"/>
    </source>
</evidence>
<evidence type="ECO:0000256" key="4">
    <source>
        <dbReference type="SAM" id="MobiDB-lite"/>
    </source>
</evidence>
<sequence length="948" mass="101940">MASSIRRGLGAWTRLLSLLLLAAWEVGSGQLRYSVPEEAKHGTFVGRIAQDLGLELAELVPRLFRVASKRHGDLLEVNLQNGILFVNSRIDREELCGRSAECSIHLEVIVDRPLQVFHVEVEVKDINDNPPVFPMTVKTIRFPESRLLDSRFPLEGASDADIGVNALLSYKLSSSEFFFLDIQTNDELSESLSLVLGKSLDREETAEVNLLLVATDGGKPELTGTVQILIKVLDVNDNEPTFAQSVYKVKLLENTANGTLVVKLNASDADEGSNSEIVYSLGSDVSSTIQTKFTIDPISGEIRTKGKLDYEEAKSYEIQVTATDKGTPSMSGHCKISLKLVDINDNTPEVSITSLSLPISENASLGTVIALITVSDRDSGTNGHVTCSLTPHVPFKLVSTFKNYYSLVLDSALDRESVSAYELVVTARDGGSPSLWATTSVSIEVADVNDNAPAFAQPEYTVFVKENNPPGCHIFTVSAWDADAQENALVSYSLVERRVGERALSSYVSVHAESGKVYALQPLDHEEVELLQFQVTARDAGVPPLGSNVTLQVFVLDENDNAPALLAPRAGTAAGAVSELVPWSVGAGHVVAKVRAVDADSGYNAWLSYELQLGTGSARIPFRVGLYTGEISTTRALDEADSPRHRLLVLVKDHGEPALTATATVLVSLVESGQAPKASSRAWVGAAGSEATLVDVNVYLIIAICAVSSLLVLTVLLYTALRCSVPATEGARAPGKPTLVCSSAVGSWSYSQQRRQRVCSGEDPPKTDLMAFSPSLSQGPDSAEEKQLSESEYVGKPRQPNPDWRYSASLRAGMHSSVHLEEAGILRAGPGGPDQQWPTVSSATPEPEAGEVSPPVGAGVNSNSWTFKYGPGNPKQSGPGELPDKFIIPGSPAIISIRQEPANSQIDKSDFITFGKKEETKKKKKKKKGNKTQEKKEKGNSTTDNSDQ</sequence>
<name>PCDA2_PANTR</name>
<proteinExistence type="inferred from homology"/>